<protein>
    <recommendedName>
        <fullName evidence="1">L-arabinose isomerase</fullName>
        <ecNumber evidence="1">5.3.1.4</ecNumber>
    </recommendedName>
</protein>
<evidence type="ECO:0000255" key="1">
    <source>
        <dbReference type="HAMAP-Rule" id="MF_00519"/>
    </source>
</evidence>
<keyword id="KW-0054">Arabinose catabolism</keyword>
<keyword id="KW-0119">Carbohydrate metabolism</keyword>
<keyword id="KW-0413">Isomerase</keyword>
<keyword id="KW-0464">Manganese</keyword>
<keyword id="KW-0479">Metal-binding</keyword>
<dbReference type="EC" id="5.3.1.4" evidence="1"/>
<dbReference type="EMBL" id="CP000139">
    <property type="protein sequence ID" value="ABR39979.1"/>
    <property type="molecule type" value="Genomic_DNA"/>
</dbReference>
<dbReference type="RefSeq" id="WP_011965559.1">
    <property type="nucleotide sequence ID" value="NC_009614.1"/>
</dbReference>
<dbReference type="SMR" id="A6L2R5"/>
<dbReference type="STRING" id="435590.BVU_2320"/>
<dbReference type="PaxDb" id="435590-BVU_2320"/>
<dbReference type="GeneID" id="5303284"/>
<dbReference type="KEGG" id="bvu:BVU_2320"/>
<dbReference type="PATRIC" id="fig|435590.9.peg.2395"/>
<dbReference type="eggNOG" id="COG2160">
    <property type="taxonomic scope" value="Bacteria"/>
</dbReference>
<dbReference type="HOGENOM" id="CLU_045663_0_0_10"/>
<dbReference type="BioCyc" id="BVUL435590:G1G59-2413-MONOMER"/>
<dbReference type="UniPathway" id="UPA00145">
    <property type="reaction ID" value="UER00565"/>
</dbReference>
<dbReference type="Proteomes" id="UP000002861">
    <property type="component" value="Chromosome"/>
</dbReference>
<dbReference type="GO" id="GO:0005829">
    <property type="term" value="C:cytosol"/>
    <property type="evidence" value="ECO:0007669"/>
    <property type="project" value="TreeGrafter"/>
</dbReference>
<dbReference type="GO" id="GO:0008733">
    <property type="term" value="F:L-arabinose isomerase activity"/>
    <property type="evidence" value="ECO:0007669"/>
    <property type="project" value="UniProtKB-UniRule"/>
</dbReference>
<dbReference type="GO" id="GO:0030145">
    <property type="term" value="F:manganese ion binding"/>
    <property type="evidence" value="ECO:0007669"/>
    <property type="project" value="UniProtKB-UniRule"/>
</dbReference>
<dbReference type="GO" id="GO:0019569">
    <property type="term" value="P:L-arabinose catabolic process to xylulose 5-phosphate"/>
    <property type="evidence" value="ECO:0007669"/>
    <property type="project" value="UniProtKB-UniRule"/>
</dbReference>
<dbReference type="CDD" id="cd03557">
    <property type="entry name" value="L-arabinose_isomerase"/>
    <property type="match status" value="1"/>
</dbReference>
<dbReference type="FunFam" id="3.40.50.10940:FF:000001">
    <property type="entry name" value="L-arabinose isomerase"/>
    <property type="match status" value="1"/>
</dbReference>
<dbReference type="Gene3D" id="3.40.50.10940">
    <property type="match status" value="1"/>
</dbReference>
<dbReference type="HAMAP" id="MF_00519">
    <property type="entry name" value="Arabinose_Isome"/>
    <property type="match status" value="1"/>
</dbReference>
<dbReference type="InterPro" id="IPR024664">
    <property type="entry name" value="Ara_Isoase_C"/>
</dbReference>
<dbReference type="InterPro" id="IPR055390">
    <property type="entry name" value="AraA_central"/>
</dbReference>
<dbReference type="InterPro" id="IPR055389">
    <property type="entry name" value="AraA_N"/>
</dbReference>
<dbReference type="InterPro" id="IPR038583">
    <property type="entry name" value="AraA_N_sf"/>
</dbReference>
<dbReference type="InterPro" id="IPR004216">
    <property type="entry name" value="Fuc/Ara_isomerase_C"/>
</dbReference>
<dbReference type="InterPro" id="IPR009015">
    <property type="entry name" value="Fucose_isomerase_N/cen_sf"/>
</dbReference>
<dbReference type="InterPro" id="IPR003762">
    <property type="entry name" value="Lara_isomerase"/>
</dbReference>
<dbReference type="NCBIfam" id="NF002795">
    <property type="entry name" value="PRK02929.1"/>
    <property type="match status" value="1"/>
</dbReference>
<dbReference type="PANTHER" id="PTHR38464">
    <property type="entry name" value="L-ARABINOSE ISOMERASE"/>
    <property type="match status" value="1"/>
</dbReference>
<dbReference type="PANTHER" id="PTHR38464:SF1">
    <property type="entry name" value="L-ARABINOSE ISOMERASE"/>
    <property type="match status" value="1"/>
</dbReference>
<dbReference type="Pfam" id="PF24856">
    <property type="entry name" value="AraA_central"/>
    <property type="match status" value="1"/>
</dbReference>
<dbReference type="Pfam" id="PF02610">
    <property type="entry name" value="AraA_N"/>
    <property type="match status" value="1"/>
</dbReference>
<dbReference type="Pfam" id="PF11762">
    <property type="entry name" value="Arabinose_Iso_C"/>
    <property type="match status" value="1"/>
</dbReference>
<dbReference type="PIRSF" id="PIRSF001478">
    <property type="entry name" value="L-ara_isomerase"/>
    <property type="match status" value="1"/>
</dbReference>
<dbReference type="SUPFAM" id="SSF50443">
    <property type="entry name" value="FucI/AraA C-terminal domain-like"/>
    <property type="match status" value="1"/>
</dbReference>
<dbReference type="SUPFAM" id="SSF53743">
    <property type="entry name" value="FucI/AraA N-terminal and middle domains"/>
    <property type="match status" value="1"/>
</dbReference>
<proteinExistence type="inferred from homology"/>
<organism>
    <name type="scientific">Phocaeicola vulgatus (strain ATCC 8482 / DSM 1447 / JCM 5826 / CCUG 4940 / NBRC 14291 / NCTC 11154)</name>
    <name type="common">Bacteroides vulgatus</name>
    <dbReference type="NCBI Taxonomy" id="435590"/>
    <lineage>
        <taxon>Bacteria</taxon>
        <taxon>Pseudomonadati</taxon>
        <taxon>Bacteroidota</taxon>
        <taxon>Bacteroidia</taxon>
        <taxon>Bacteroidales</taxon>
        <taxon>Bacteroidaceae</taxon>
        <taxon>Phocaeicola</taxon>
    </lineage>
</organism>
<sequence>MEKAFDQYEVWFVTGAQLLYGGDAVIAVDAHSNEMVNGLNESGKLPVKVVYKGTANSSKEVEAVFKAANNDEKCIGVITWMHTFSPAKMWIHGLQQLKKPLLHLHTQFNKEIPWDTMDMDFMNLNQSAHGDREFGHICTRMRIRRKVVVGYWKDEDTQHKIAVWMRVCAGWADSQDMLIIRFGDQMNNVAVTDGDKVEAEQRMGYHVDYCPASELMKYHKNIKDTDVEALVATYFNEYDHDASLEDKSTEAYQKVWNAAKAELALRAILKAKGAKGFTTNFDDLGQTDGSYFDQIPGLASQRLMAEGYGFGAEGDWKSAALYRTVWVMNQGLSKGCSFLEDYTLNFDGANSAILQSHMLEVCPLIAASKPRLEVHFLGIGIRKSQTARLVFTSKVGSGCTATVVDLGNRFRLIVNDVECIESKPLPKLPVASALWIPMPNFEVGAGAWILAGGTHHSCFSYDLTAEYWEDYAEIAGIEMIRIDKDTTISNFKKELRMNEVYYMLNKALC</sequence>
<feature type="chain" id="PRO_0000312602" description="L-arabinose isomerase">
    <location>
        <begin position="1"/>
        <end position="509"/>
    </location>
</feature>
<feature type="binding site" evidence="1">
    <location>
        <position position="313"/>
    </location>
    <ligand>
        <name>Mn(2+)</name>
        <dbReference type="ChEBI" id="CHEBI:29035"/>
    </ligand>
</feature>
<feature type="binding site" evidence="1">
    <location>
        <position position="340"/>
    </location>
    <ligand>
        <name>Mn(2+)</name>
        <dbReference type="ChEBI" id="CHEBI:29035"/>
    </ligand>
</feature>
<feature type="binding site" evidence="1">
    <location>
        <position position="357"/>
    </location>
    <ligand>
        <name>Mn(2+)</name>
        <dbReference type="ChEBI" id="CHEBI:29035"/>
    </ligand>
</feature>
<feature type="binding site" evidence="1">
    <location>
        <position position="456"/>
    </location>
    <ligand>
        <name>Mn(2+)</name>
        <dbReference type="ChEBI" id="CHEBI:29035"/>
    </ligand>
</feature>
<name>ARAA_PHOV8</name>
<accession>A6L2R5</accession>
<comment type="function">
    <text evidence="1">Catalyzes the conversion of L-arabinose to L-ribulose.</text>
</comment>
<comment type="catalytic activity">
    <reaction evidence="1">
        <text>beta-L-arabinopyranose = L-ribulose</text>
        <dbReference type="Rhea" id="RHEA:14821"/>
        <dbReference type="ChEBI" id="CHEBI:16880"/>
        <dbReference type="ChEBI" id="CHEBI:40886"/>
        <dbReference type="EC" id="5.3.1.4"/>
    </reaction>
</comment>
<comment type="cofactor">
    <cofactor evidence="1">
        <name>Mn(2+)</name>
        <dbReference type="ChEBI" id="CHEBI:29035"/>
    </cofactor>
    <text evidence="1">Binds 1 Mn(2+) ion per subunit.</text>
</comment>
<comment type="pathway">
    <text evidence="1">Carbohydrate degradation; L-arabinose degradation via L-ribulose; D-xylulose 5-phosphate from L-arabinose (bacterial route): step 1/3.</text>
</comment>
<comment type="similarity">
    <text evidence="1">Belongs to the arabinose isomerase family.</text>
</comment>
<reference key="1">
    <citation type="journal article" date="2007" name="PLoS Biol.">
        <title>Evolution of symbiotic bacteria in the distal human intestine.</title>
        <authorList>
            <person name="Xu J."/>
            <person name="Mahowald M.A."/>
            <person name="Ley R.E."/>
            <person name="Lozupone C.A."/>
            <person name="Hamady M."/>
            <person name="Martens E.C."/>
            <person name="Henrissat B."/>
            <person name="Coutinho P.M."/>
            <person name="Minx P."/>
            <person name="Latreille P."/>
            <person name="Cordum H."/>
            <person name="Van Brunt A."/>
            <person name="Kim K."/>
            <person name="Fulton R.S."/>
            <person name="Fulton L.A."/>
            <person name="Clifton S.W."/>
            <person name="Wilson R.K."/>
            <person name="Knight R.D."/>
            <person name="Gordon J.I."/>
        </authorList>
    </citation>
    <scope>NUCLEOTIDE SEQUENCE [LARGE SCALE GENOMIC DNA]</scope>
    <source>
        <strain>ATCC 8482 / DSM 1447 / JCM 5826 / CCUG 4940 / NBRC 14291 / NCTC 11154</strain>
    </source>
</reference>
<gene>
    <name evidence="1" type="primary">araA</name>
    <name type="ordered locus">BVU_2320</name>
</gene>